<comment type="function">
    <text evidence="1">Catalyzes the conversion of D-ribulose 5-phosphate to formate and 3,4-dihydroxy-2-butanone 4-phosphate.</text>
</comment>
<comment type="catalytic activity">
    <reaction evidence="1">
        <text>D-ribulose 5-phosphate = (2S)-2-hydroxy-3-oxobutyl phosphate + formate + H(+)</text>
        <dbReference type="Rhea" id="RHEA:18457"/>
        <dbReference type="ChEBI" id="CHEBI:15378"/>
        <dbReference type="ChEBI" id="CHEBI:15740"/>
        <dbReference type="ChEBI" id="CHEBI:58121"/>
        <dbReference type="ChEBI" id="CHEBI:58830"/>
        <dbReference type="EC" id="4.1.99.12"/>
    </reaction>
</comment>
<comment type="cofactor">
    <cofactor evidence="1">
        <name>Mg(2+)</name>
        <dbReference type="ChEBI" id="CHEBI:18420"/>
    </cofactor>
    <cofactor evidence="1">
        <name>Mn(2+)</name>
        <dbReference type="ChEBI" id="CHEBI:29035"/>
    </cofactor>
    <text evidence="1">Binds 2 divalent metal cations per subunit. Magnesium or manganese.</text>
</comment>
<comment type="pathway">
    <text evidence="1">Cofactor biosynthesis; riboflavin biosynthesis; 2-hydroxy-3-oxobutyl phosphate from D-ribulose 5-phosphate: step 1/1.</text>
</comment>
<comment type="subunit">
    <text evidence="1">Homodimer.</text>
</comment>
<comment type="similarity">
    <text evidence="1">Belongs to the DHBP synthase family.</text>
</comment>
<organism>
    <name type="scientific">Salmonella agona (strain SL483)</name>
    <dbReference type="NCBI Taxonomy" id="454166"/>
    <lineage>
        <taxon>Bacteria</taxon>
        <taxon>Pseudomonadati</taxon>
        <taxon>Pseudomonadota</taxon>
        <taxon>Gammaproteobacteria</taxon>
        <taxon>Enterobacterales</taxon>
        <taxon>Enterobacteriaceae</taxon>
        <taxon>Salmonella</taxon>
    </lineage>
</organism>
<accession>B5F690</accession>
<dbReference type="EC" id="4.1.99.12" evidence="1"/>
<dbReference type="EMBL" id="CP001138">
    <property type="protein sequence ID" value="ACH52795.1"/>
    <property type="molecule type" value="Genomic_DNA"/>
</dbReference>
<dbReference type="RefSeq" id="WP_001076978.1">
    <property type="nucleotide sequence ID" value="NC_011149.1"/>
</dbReference>
<dbReference type="SMR" id="B5F690"/>
<dbReference type="KEGG" id="sea:SeAg_B3378"/>
<dbReference type="HOGENOM" id="CLU_020273_3_0_6"/>
<dbReference type="UniPathway" id="UPA00275">
    <property type="reaction ID" value="UER00399"/>
</dbReference>
<dbReference type="Proteomes" id="UP000008819">
    <property type="component" value="Chromosome"/>
</dbReference>
<dbReference type="GO" id="GO:0005829">
    <property type="term" value="C:cytosol"/>
    <property type="evidence" value="ECO:0007669"/>
    <property type="project" value="TreeGrafter"/>
</dbReference>
<dbReference type="GO" id="GO:0008686">
    <property type="term" value="F:3,4-dihydroxy-2-butanone-4-phosphate synthase activity"/>
    <property type="evidence" value="ECO:0007669"/>
    <property type="project" value="UniProtKB-UniRule"/>
</dbReference>
<dbReference type="GO" id="GO:0000287">
    <property type="term" value="F:magnesium ion binding"/>
    <property type="evidence" value="ECO:0007669"/>
    <property type="project" value="UniProtKB-UniRule"/>
</dbReference>
<dbReference type="GO" id="GO:0030145">
    <property type="term" value="F:manganese ion binding"/>
    <property type="evidence" value="ECO:0007669"/>
    <property type="project" value="UniProtKB-UniRule"/>
</dbReference>
<dbReference type="GO" id="GO:0009231">
    <property type="term" value="P:riboflavin biosynthetic process"/>
    <property type="evidence" value="ECO:0007669"/>
    <property type="project" value="UniProtKB-UniRule"/>
</dbReference>
<dbReference type="FunFam" id="3.90.870.10:FF:000002">
    <property type="entry name" value="3,4-dihydroxy-2-butanone 4-phosphate synthase"/>
    <property type="match status" value="1"/>
</dbReference>
<dbReference type="Gene3D" id="3.90.870.10">
    <property type="entry name" value="DHBP synthase"/>
    <property type="match status" value="1"/>
</dbReference>
<dbReference type="HAMAP" id="MF_00180">
    <property type="entry name" value="RibB"/>
    <property type="match status" value="1"/>
</dbReference>
<dbReference type="InterPro" id="IPR017945">
    <property type="entry name" value="DHBP_synth_RibB-like_a/b_dom"/>
</dbReference>
<dbReference type="InterPro" id="IPR000422">
    <property type="entry name" value="DHBP_synthase_RibB"/>
</dbReference>
<dbReference type="NCBIfam" id="TIGR00506">
    <property type="entry name" value="ribB"/>
    <property type="match status" value="1"/>
</dbReference>
<dbReference type="PANTHER" id="PTHR21327:SF38">
    <property type="entry name" value="3,4-DIHYDROXY-2-BUTANONE 4-PHOSPHATE SYNTHASE"/>
    <property type="match status" value="1"/>
</dbReference>
<dbReference type="PANTHER" id="PTHR21327">
    <property type="entry name" value="GTP CYCLOHYDROLASE II-RELATED"/>
    <property type="match status" value="1"/>
</dbReference>
<dbReference type="Pfam" id="PF00926">
    <property type="entry name" value="DHBP_synthase"/>
    <property type="match status" value="1"/>
</dbReference>
<dbReference type="SUPFAM" id="SSF55821">
    <property type="entry name" value="YrdC/RibB"/>
    <property type="match status" value="1"/>
</dbReference>
<feature type="chain" id="PRO_1000098283" description="3,4-dihydroxy-2-butanone 4-phosphate synthase">
    <location>
        <begin position="1"/>
        <end position="217"/>
    </location>
</feature>
<feature type="binding site" evidence="1">
    <location>
        <begin position="37"/>
        <end position="38"/>
    </location>
    <ligand>
        <name>D-ribulose 5-phosphate</name>
        <dbReference type="ChEBI" id="CHEBI:58121"/>
    </ligand>
</feature>
<feature type="binding site" evidence="1">
    <location>
        <position position="38"/>
    </location>
    <ligand>
        <name>Mg(2+)</name>
        <dbReference type="ChEBI" id="CHEBI:18420"/>
        <label>1</label>
    </ligand>
</feature>
<feature type="binding site" evidence="1">
    <location>
        <position position="38"/>
    </location>
    <ligand>
        <name>Mg(2+)</name>
        <dbReference type="ChEBI" id="CHEBI:18420"/>
        <label>2</label>
    </ligand>
</feature>
<feature type="binding site" evidence="1">
    <location>
        <position position="42"/>
    </location>
    <ligand>
        <name>D-ribulose 5-phosphate</name>
        <dbReference type="ChEBI" id="CHEBI:58121"/>
    </ligand>
</feature>
<feature type="binding site" evidence="1">
    <location>
        <begin position="150"/>
        <end position="154"/>
    </location>
    <ligand>
        <name>D-ribulose 5-phosphate</name>
        <dbReference type="ChEBI" id="CHEBI:58121"/>
    </ligand>
</feature>
<feature type="binding site" evidence="1">
    <location>
        <position position="153"/>
    </location>
    <ligand>
        <name>Mg(2+)</name>
        <dbReference type="ChEBI" id="CHEBI:18420"/>
        <label>2</label>
    </ligand>
</feature>
<feature type="binding site" evidence="1">
    <location>
        <position position="174"/>
    </location>
    <ligand>
        <name>D-ribulose 5-phosphate</name>
        <dbReference type="ChEBI" id="CHEBI:58121"/>
    </ligand>
</feature>
<feature type="site" description="Essential for catalytic activity" evidence="1">
    <location>
        <position position="136"/>
    </location>
</feature>
<feature type="site" description="Essential for catalytic activity" evidence="1">
    <location>
        <position position="174"/>
    </location>
</feature>
<proteinExistence type="inferred from homology"/>
<evidence type="ECO:0000255" key="1">
    <source>
        <dbReference type="HAMAP-Rule" id="MF_00180"/>
    </source>
</evidence>
<gene>
    <name evidence="1" type="primary">ribB</name>
    <name type="ordered locus">SeAg_B3378</name>
</gene>
<protein>
    <recommendedName>
        <fullName evidence="1">3,4-dihydroxy-2-butanone 4-phosphate synthase</fullName>
        <shortName evidence="1">DHBP synthase</shortName>
        <ecNumber evidence="1">4.1.99.12</ecNumber>
    </recommendedName>
</protein>
<name>RIBB_SALA4</name>
<sequence>MNQTLLSSFGTPFERVELALDALREGRGVMVLDDEDRENEGDMIFPAETMTVEQMALTIRHGSGIVCLCITEDRRKQLDLPMMVENNTSAYGTGFTVTIEAAEGVTTGVSAADRVTTVRAAIKDGAKPSDLNRPGHVFPLRAQAGGVLTRGGHTEATIDLMTLAGFKPAGVLCELTNDDGTMARAPECIAFAGQHNMAVVTIEDLVAYRQAHERKAS</sequence>
<keyword id="KW-0456">Lyase</keyword>
<keyword id="KW-0460">Magnesium</keyword>
<keyword id="KW-0464">Manganese</keyword>
<keyword id="KW-0479">Metal-binding</keyword>
<keyword id="KW-0686">Riboflavin biosynthesis</keyword>
<reference key="1">
    <citation type="journal article" date="2011" name="J. Bacteriol.">
        <title>Comparative genomics of 28 Salmonella enterica isolates: evidence for CRISPR-mediated adaptive sublineage evolution.</title>
        <authorList>
            <person name="Fricke W.F."/>
            <person name="Mammel M.K."/>
            <person name="McDermott P.F."/>
            <person name="Tartera C."/>
            <person name="White D.G."/>
            <person name="Leclerc J.E."/>
            <person name="Ravel J."/>
            <person name="Cebula T.A."/>
        </authorList>
    </citation>
    <scope>NUCLEOTIDE SEQUENCE [LARGE SCALE GENOMIC DNA]</scope>
    <source>
        <strain>SL483</strain>
    </source>
</reference>